<proteinExistence type="evidence at transcript level"/>
<dbReference type="EMBL" id="AB021878">
    <property type="protein sequence ID" value="BAA83337.1"/>
    <property type="molecule type" value="mRNA"/>
</dbReference>
<dbReference type="EMBL" id="AP004274">
    <property type="protein sequence ID" value="BAC20076.1"/>
    <property type="molecule type" value="Genomic_DNA"/>
</dbReference>
<dbReference type="EMBL" id="AP008213">
    <property type="protein sequence ID" value="BAF22485.2"/>
    <property type="status" value="ALT_INIT"/>
    <property type="molecule type" value="Genomic_DNA"/>
</dbReference>
<dbReference type="EMBL" id="AP014963">
    <property type="protein sequence ID" value="BAT03109.1"/>
    <property type="molecule type" value="Genomic_DNA"/>
</dbReference>
<dbReference type="EMBL" id="AK064004">
    <property type="protein sequence ID" value="BAG88958.1"/>
    <property type="molecule type" value="mRNA"/>
</dbReference>
<dbReference type="SMR" id="Q9SXJ8"/>
<dbReference type="FunCoup" id="Q9SXJ8">
    <property type="interactions" value="63"/>
</dbReference>
<dbReference type="STRING" id="39947.Q9SXJ8"/>
<dbReference type="PaxDb" id="39947-Q9SXJ8"/>
<dbReference type="EnsemblPlants" id="Os07t0666900-01">
    <property type="protein sequence ID" value="Os07t0666900-01"/>
    <property type="gene ID" value="Os07g0666900"/>
</dbReference>
<dbReference type="EnsemblPlants" id="Os07t0666900-02">
    <property type="protein sequence ID" value="Os07t0666900-02"/>
    <property type="gene ID" value="Os07g0666900"/>
</dbReference>
<dbReference type="GeneID" id="4344217"/>
<dbReference type="Gramene" id="Os07t0666900-01">
    <property type="protein sequence ID" value="Os07t0666900-01"/>
    <property type="gene ID" value="Os07g0666900"/>
</dbReference>
<dbReference type="Gramene" id="Os07t0666900-02">
    <property type="protein sequence ID" value="Os07t0666900-02"/>
    <property type="gene ID" value="Os07g0666900"/>
</dbReference>
<dbReference type="KEGG" id="dosa:Os07g0666900"/>
<dbReference type="KEGG" id="osa:4344217"/>
<dbReference type="eggNOG" id="KOG1965">
    <property type="taxonomic scope" value="Eukaryota"/>
</dbReference>
<dbReference type="HOGENOM" id="CLU_005912_11_2_1"/>
<dbReference type="InParanoid" id="Q9SXJ8"/>
<dbReference type="OMA" id="LICEAFI"/>
<dbReference type="OrthoDB" id="196264at2759"/>
<dbReference type="Proteomes" id="UP000000763">
    <property type="component" value="Chromosome 7"/>
</dbReference>
<dbReference type="Proteomes" id="UP000059680">
    <property type="component" value="Chromosome 7"/>
</dbReference>
<dbReference type="GO" id="GO:0005886">
    <property type="term" value="C:plasma membrane"/>
    <property type="evidence" value="ECO:0000318"/>
    <property type="project" value="GO_Central"/>
</dbReference>
<dbReference type="GO" id="GO:0005774">
    <property type="term" value="C:vacuolar membrane"/>
    <property type="evidence" value="ECO:0000314"/>
    <property type="project" value="UniProtKB"/>
</dbReference>
<dbReference type="GO" id="GO:0015386">
    <property type="term" value="F:potassium:proton antiporter activity"/>
    <property type="evidence" value="ECO:0000314"/>
    <property type="project" value="UniProtKB"/>
</dbReference>
<dbReference type="GO" id="GO:0015385">
    <property type="term" value="F:sodium:proton antiporter activity"/>
    <property type="evidence" value="ECO:0000314"/>
    <property type="project" value="UniProtKB"/>
</dbReference>
<dbReference type="GO" id="GO:1901002">
    <property type="term" value="P:positive regulation of response to salt stress"/>
    <property type="evidence" value="ECO:0000315"/>
    <property type="project" value="UniProtKB"/>
</dbReference>
<dbReference type="GO" id="GO:0071805">
    <property type="term" value="P:potassium ion transmembrane transport"/>
    <property type="evidence" value="ECO:0000318"/>
    <property type="project" value="GO_Central"/>
</dbReference>
<dbReference type="GO" id="GO:0051453">
    <property type="term" value="P:regulation of intracellular pH"/>
    <property type="evidence" value="ECO:0000318"/>
    <property type="project" value="GO_Central"/>
</dbReference>
<dbReference type="GO" id="GO:0098719">
    <property type="term" value="P:sodium ion import across plasma membrane"/>
    <property type="evidence" value="ECO:0000318"/>
    <property type="project" value="GO_Central"/>
</dbReference>
<dbReference type="GO" id="GO:0034486">
    <property type="term" value="P:vacuolar transmembrane transport"/>
    <property type="evidence" value="ECO:0000315"/>
    <property type="project" value="UniProtKB"/>
</dbReference>
<dbReference type="Gene3D" id="6.10.140.1330">
    <property type="match status" value="1"/>
</dbReference>
<dbReference type="InterPro" id="IPR018422">
    <property type="entry name" value="Cation/H_exchanger_CPA1"/>
</dbReference>
<dbReference type="InterPro" id="IPR006153">
    <property type="entry name" value="Cation/H_exchanger_TM"/>
</dbReference>
<dbReference type="InterPro" id="IPR004709">
    <property type="entry name" value="NaH_exchanger"/>
</dbReference>
<dbReference type="NCBIfam" id="TIGR00840">
    <property type="entry name" value="b_cpa1"/>
    <property type="match status" value="1"/>
</dbReference>
<dbReference type="PANTHER" id="PTHR10110">
    <property type="entry name" value="SODIUM/HYDROGEN EXCHANGER"/>
    <property type="match status" value="1"/>
</dbReference>
<dbReference type="PANTHER" id="PTHR10110:SF117">
    <property type="entry name" value="SODIUM_HYDROGEN EXCHANGER 2"/>
    <property type="match status" value="1"/>
</dbReference>
<dbReference type="Pfam" id="PF00999">
    <property type="entry name" value="Na_H_Exchanger"/>
    <property type="match status" value="1"/>
</dbReference>
<dbReference type="PRINTS" id="PR01084">
    <property type="entry name" value="NAHEXCHNGR"/>
</dbReference>
<feature type="chain" id="PRO_0000455449" description="Sodium/hydrogen exchanger 1">
    <location>
        <begin position="1"/>
        <end position="535"/>
    </location>
</feature>
<feature type="topological domain" description="Cytoplasmic" evidence="6">
    <location>
        <begin position="1"/>
        <end position="21"/>
    </location>
</feature>
<feature type="transmembrane region" description="Helical" evidence="1">
    <location>
        <begin position="22"/>
        <end position="42"/>
    </location>
</feature>
<feature type="topological domain" description="Vacuolar" evidence="6">
    <location>
        <begin position="43"/>
        <end position="46"/>
    </location>
</feature>
<feature type="transmembrane region" description="Helical" evidence="1">
    <location>
        <begin position="47"/>
        <end position="67"/>
    </location>
</feature>
<feature type="topological domain" description="Cytoplasmic" evidence="6">
    <location>
        <begin position="68"/>
        <end position="75"/>
    </location>
</feature>
<feature type="transmembrane region" description="Helical" evidence="1">
    <location>
        <begin position="76"/>
        <end position="96"/>
    </location>
</feature>
<feature type="topological domain" description="Vacuolar" evidence="6">
    <location>
        <begin position="97"/>
        <end position="114"/>
    </location>
</feature>
<feature type="transmembrane region" description="Helical" evidence="1">
    <location>
        <begin position="115"/>
        <end position="135"/>
    </location>
</feature>
<feature type="topological domain" description="Cytoplasmic" evidence="6">
    <location>
        <begin position="136"/>
        <end position="137"/>
    </location>
</feature>
<feature type="transmembrane region" description="Helical" evidence="1">
    <location>
        <begin position="138"/>
        <end position="158"/>
    </location>
</feature>
<feature type="topological domain" description="Vacuolar" evidence="6">
    <location>
        <begin position="159"/>
        <end position="173"/>
    </location>
</feature>
<feature type="transmembrane region" description="Helical" evidence="1">
    <location>
        <begin position="174"/>
        <end position="194"/>
    </location>
</feature>
<feature type="topological domain" description="Cytoplasmic" evidence="6">
    <location>
        <begin position="195"/>
        <end position="218"/>
    </location>
</feature>
<feature type="transmembrane region" description="Helical" evidence="1">
    <location>
        <begin position="219"/>
        <end position="239"/>
    </location>
</feature>
<feature type="topological domain" description="Vacuolar" evidence="6">
    <location>
        <begin position="240"/>
        <end position="264"/>
    </location>
</feature>
<feature type="transmembrane region" description="Helical" evidence="1">
    <location>
        <begin position="265"/>
        <end position="285"/>
    </location>
</feature>
<feature type="topological domain" description="Cytoplasmic" evidence="6">
    <location>
        <begin position="286"/>
        <end position="304"/>
    </location>
</feature>
<feature type="transmembrane region" description="Helical" evidence="1">
    <location>
        <begin position="305"/>
        <end position="325"/>
    </location>
</feature>
<feature type="topological domain" description="Vacuolar" evidence="6">
    <location>
        <begin position="326"/>
        <end position="344"/>
    </location>
</feature>
<feature type="transmembrane region" description="Helical" evidence="1">
    <location>
        <begin position="345"/>
        <end position="365"/>
    </location>
</feature>
<feature type="topological domain" description="Cytoplasmic" evidence="6">
    <location>
        <begin position="366"/>
        <end position="381"/>
    </location>
</feature>
<feature type="transmembrane region" description="Helical" evidence="1">
    <location>
        <begin position="382"/>
        <end position="402"/>
    </location>
</feature>
<feature type="topological domain" description="Vacuolar" evidence="6">
    <location>
        <begin position="403"/>
        <end position="415"/>
    </location>
</feature>
<feature type="transmembrane region" description="Helical" evidence="1">
    <location>
        <begin position="416"/>
        <end position="436"/>
    </location>
</feature>
<feature type="topological domain" description="Cytoplasmic" evidence="6">
    <location>
        <begin position="437"/>
        <end position="535"/>
    </location>
</feature>
<feature type="region of interest" description="Disordered" evidence="2">
    <location>
        <begin position="452"/>
        <end position="478"/>
    </location>
</feature>
<feature type="compositionally biased region" description="Low complexity" evidence="2">
    <location>
        <begin position="454"/>
        <end position="469"/>
    </location>
</feature>
<keyword id="KW-0050">Antiport</keyword>
<keyword id="KW-0406">Ion transport</keyword>
<keyword id="KW-0472">Membrane</keyword>
<keyword id="KW-0630">Potassium</keyword>
<keyword id="KW-0633">Potassium transport</keyword>
<keyword id="KW-1185">Reference proteome</keyword>
<keyword id="KW-0915">Sodium</keyword>
<keyword id="KW-0739">Sodium transport</keyword>
<keyword id="KW-0812">Transmembrane</keyword>
<keyword id="KW-1133">Transmembrane helix</keyword>
<keyword id="KW-0813">Transport</keyword>
<keyword id="KW-0926">Vacuole</keyword>
<organism>
    <name type="scientific">Oryza sativa subsp. japonica</name>
    <name type="common">Rice</name>
    <dbReference type="NCBI Taxonomy" id="39947"/>
    <lineage>
        <taxon>Eukaryota</taxon>
        <taxon>Viridiplantae</taxon>
        <taxon>Streptophyta</taxon>
        <taxon>Embryophyta</taxon>
        <taxon>Tracheophyta</taxon>
        <taxon>Spermatophyta</taxon>
        <taxon>Magnoliopsida</taxon>
        <taxon>Liliopsida</taxon>
        <taxon>Poales</taxon>
        <taxon>Poaceae</taxon>
        <taxon>BOP clade</taxon>
        <taxon>Oryzoideae</taxon>
        <taxon>Oryzeae</taxon>
        <taxon>Oryzinae</taxon>
        <taxon>Oryza</taxon>
        <taxon>Oryza sativa</taxon>
    </lineage>
</organism>
<reference key="1">
    <citation type="journal article" date="1999" name="Biochim. Biophys. Acta">
        <title>Molecular cloning and expression of the Na+/H+ exchanger gene in Oryza sativa.</title>
        <authorList>
            <person name="Fukuda A."/>
            <person name="Nakamura A."/>
            <person name="Tanaka Y."/>
        </authorList>
    </citation>
    <scope>NUCLEOTIDE SEQUENCE [MRNA]</scope>
    <scope>INDUCTION BY SALT</scope>
</reference>
<reference key="2">
    <citation type="journal article" date="2005" name="Nature">
        <title>The map-based sequence of the rice genome.</title>
        <authorList>
            <consortium name="International rice genome sequencing project (IRGSP)"/>
        </authorList>
    </citation>
    <scope>NUCLEOTIDE SEQUENCE [LARGE SCALE GENOMIC DNA]</scope>
    <source>
        <strain>cv. Nipponbare</strain>
    </source>
</reference>
<reference key="3">
    <citation type="journal article" date="2008" name="Nucleic Acids Res.">
        <title>The rice annotation project database (RAP-DB): 2008 update.</title>
        <authorList>
            <consortium name="The rice annotation project (RAP)"/>
        </authorList>
    </citation>
    <scope>GENOME REANNOTATION</scope>
    <source>
        <strain>cv. Nipponbare</strain>
    </source>
</reference>
<reference key="4">
    <citation type="journal article" date="2013" name="Rice">
        <title>Improvement of the Oryza sativa Nipponbare reference genome using next generation sequence and optical map data.</title>
        <authorList>
            <person name="Kawahara Y."/>
            <person name="de la Bastide M."/>
            <person name="Hamilton J.P."/>
            <person name="Kanamori H."/>
            <person name="McCombie W.R."/>
            <person name="Ouyang S."/>
            <person name="Schwartz D.C."/>
            <person name="Tanaka T."/>
            <person name="Wu J."/>
            <person name="Zhou S."/>
            <person name="Childs K.L."/>
            <person name="Davidson R.M."/>
            <person name="Lin H."/>
            <person name="Quesada-Ocampo L."/>
            <person name="Vaillancourt B."/>
            <person name="Sakai H."/>
            <person name="Lee S.S."/>
            <person name="Kim J."/>
            <person name="Numa H."/>
            <person name="Itoh T."/>
            <person name="Buell C.R."/>
            <person name="Matsumoto T."/>
        </authorList>
    </citation>
    <scope>GENOME REANNOTATION</scope>
    <source>
        <strain>cv. Nipponbare</strain>
    </source>
</reference>
<reference key="5">
    <citation type="journal article" date="2003" name="Science">
        <title>Collection, mapping, and annotation of over 28,000 cDNA clones from japonica rice.</title>
        <authorList>
            <consortium name="The rice full-length cDNA consortium"/>
        </authorList>
    </citation>
    <scope>NUCLEOTIDE SEQUENCE [LARGE SCALE MRNA]</scope>
    <source>
        <strain>cv. Nipponbare</strain>
    </source>
</reference>
<reference key="6">
    <citation type="journal article" date="2004" name="Plant Cell Physiol.">
        <title>Function, intracellular localization and the importance in salt tolerance of a vacuolar Na(+)/H(+) antiporter from rice.</title>
        <authorList>
            <person name="Fukuda A."/>
            <person name="Nakamura A."/>
            <person name="Tagiri A."/>
            <person name="Tanaka H."/>
            <person name="Miyao A."/>
            <person name="Hirochika H."/>
            <person name="Tanaka Y."/>
        </authorList>
    </citation>
    <scope>FUNCTION</scope>
    <scope>SUBCELLULAR LOCATION</scope>
    <scope>INDUCTION BY SALT</scope>
</reference>
<sequence length="535" mass="59070">MGMEVAAARLGALYTTSDYASVVSINLFVALLCACIVLGHLLEENRWVNESITALIIGLCTGVVILLMTKGKSSHLFVFSEDLFFIYLLPPIIFNAGFQVKKKQFFRNFMTITLFGAVGTMISFFTISIAAIAIFSRMNIGTLDVGDFLAIGAIFSATDSVCTLQVLNQDETPFLYSLVFGEGVVNDATSIVLFNALQNFDLVHIDAAVVLKFLGNFFYLFLSSTFLGVFAGLLSAYIIKKLYIGRHSTDREVALMMLMAYLSYMLAELLDLSGILTVFFCGIVMSHYTWHNVTESSRVTTKHAFATLSFIAETFLFLYVGMDALDIEKWEFASDRPGKSIGISSILLGLVLIGRAAFVFPLSFLSNLTKKAPNEKITWRQQVVIWWAGLMRGAVSIALAYNKFTRSGHTQLHGNAIMITSTITVVLFSTMVFGMMTKPLIRLLLPASGHPVTSEPSSPKSLHSPLLTSMQGSDLESTTNIVRPSSLRMLLTKPTHTVHYYWRKFDDALMRPMFGGRGFVPFSPGSPTEQSHGGR</sequence>
<accession>Q9SXJ8</accession>
<accession>A0A5S6RC28</accession>
<accession>Q0D3T8</accession>
<accession>Q8H486</accession>
<evidence type="ECO:0000255" key="1"/>
<evidence type="ECO:0000256" key="2">
    <source>
        <dbReference type="SAM" id="MobiDB-lite"/>
    </source>
</evidence>
<evidence type="ECO:0000269" key="3">
    <source>
    </source>
</evidence>
<evidence type="ECO:0000269" key="4">
    <source>
    </source>
</evidence>
<evidence type="ECO:0000303" key="5">
    <source>
    </source>
</evidence>
<evidence type="ECO:0000305" key="6"/>
<evidence type="ECO:0000312" key="7">
    <source>
        <dbReference type="EMBL" id="BAF22485.2"/>
    </source>
</evidence>
<evidence type="ECO:0000312" key="8">
    <source>
        <dbReference type="EMBL" id="BAT03109.1"/>
    </source>
</evidence>
<comment type="function">
    <text evidence="4">Vacuolar antiporter that acts in low affinity electroneutral exchange of protons H(+) for cations such as Na(+) or K(+) across membranes (PubMed:14988485). Plays important roles in the transport of Na(+) and K(+) accumulated in the cytoplasm into vacuoles, and is involved in salt stress tolerance (PubMed:14988485).</text>
</comment>
<comment type="catalytic activity">
    <reaction evidence="4">
        <text>Na(+)(in) + H(+)(out) = Na(+)(out) + H(+)(in)</text>
        <dbReference type="Rhea" id="RHEA:29419"/>
        <dbReference type="ChEBI" id="CHEBI:15378"/>
        <dbReference type="ChEBI" id="CHEBI:29101"/>
    </reaction>
</comment>
<comment type="catalytic activity">
    <reaction evidence="4">
        <text>K(+)(in) + H(+)(out) = K(+)(out) + H(+)(in)</text>
        <dbReference type="Rhea" id="RHEA:29467"/>
        <dbReference type="ChEBI" id="CHEBI:15378"/>
        <dbReference type="ChEBI" id="CHEBI:29103"/>
    </reaction>
</comment>
<comment type="subcellular location">
    <subcellularLocation>
        <location evidence="4">Vacuole membrane</location>
        <topology evidence="1">Multi-pass membrane protein</topology>
    </subcellularLocation>
</comment>
<comment type="induction">
    <text evidence="3 4">Induced by NaCl in roots and shoots (PubMed:10395929, PubMed:14988485). Induced by KCl in roots and shoots (PubMed:14988485).</text>
</comment>
<comment type="miscellaneous">
    <text evidence="4">Plants overexpressing NHX1 exhibit improved tolerance to salt stress.</text>
</comment>
<comment type="similarity">
    <text evidence="6">Belongs to the monovalent cation:proton antiporter 1 (CPA1) transporter (TC 2.A.36) family.</text>
</comment>
<comment type="sequence caution" evidence="6">
    <conflict type="erroneous initiation">
        <sequence resource="EMBL-CDS" id="BAF22485"/>
    </conflict>
    <text>Extended N-terminus.</text>
</comment>
<name>NHX1_ORYSJ</name>
<gene>
    <name evidence="5" type="primary">NHX1</name>
    <name evidence="8" type="ordered locus">Os07g0666900</name>
    <name evidence="6" type="ordered locus">LOC_Os07g47100</name>
    <name evidence="7" type="ORF">P0450A04.124</name>
</gene>
<protein>
    <recommendedName>
        <fullName evidence="5">Sodium/hydrogen exchanger 1</fullName>
    </recommendedName>
    <alternativeName>
        <fullName evidence="5">Na(+)/H(+) exchanger 1</fullName>
        <shortName evidence="5">OsNHX1</shortName>
    </alternativeName>
</protein>